<name>NHP2_CAEBR</name>
<proteinExistence type="inferred from homology"/>
<accession>Q60YI3</accession>
<accession>A8XS73</accession>
<evidence type="ECO:0000250" key="1"/>
<evidence type="ECO:0000305" key="2"/>
<reference key="1">
    <citation type="journal article" date="2003" name="PLoS Biol.">
        <title>The genome sequence of Caenorhabditis briggsae: a platform for comparative genomics.</title>
        <authorList>
            <person name="Stein L.D."/>
            <person name="Bao Z."/>
            <person name="Blasiar D."/>
            <person name="Blumenthal T."/>
            <person name="Brent M.R."/>
            <person name="Chen N."/>
            <person name="Chinwalla A."/>
            <person name="Clarke L."/>
            <person name="Clee C."/>
            <person name="Coghlan A."/>
            <person name="Coulson A."/>
            <person name="D'Eustachio P."/>
            <person name="Fitch D.H.A."/>
            <person name="Fulton L.A."/>
            <person name="Fulton R.E."/>
            <person name="Griffiths-Jones S."/>
            <person name="Harris T.W."/>
            <person name="Hillier L.W."/>
            <person name="Kamath R."/>
            <person name="Kuwabara P.E."/>
            <person name="Mardis E.R."/>
            <person name="Marra M.A."/>
            <person name="Miner T.L."/>
            <person name="Minx P."/>
            <person name="Mullikin J.C."/>
            <person name="Plumb R.W."/>
            <person name="Rogers J."/>
            <person name="Schein J.E."/>
            <person name="Sohrmann M."/>
            <person name="Spieth J."/>
            <person name="Stajich J.E."/>
            <person name="Wei C."/>
            <person name="Willey D."/>
            <person name="Wilson R.K."/>
            <person name="Durbin R.M."/>
            <person name="Waterston R.H."/>
        </authorList>
    </citation>
    <scope>NUCLEOTIDE SEQUENCE [LARGE SCALE GENOMIC DNA]</scope>
    <source>
        <strain>AF16</strain>
    </source>
</reference>
<sequence>MGKRNLDETMNESAVSEIAEDVAALTTEKDEYQALCELVNPIAQPLANRKLAKKVYKLIKKAAAGEKTLREGIKDVQKELRKNEKGICILAGNVSPIDVYSHIPAICEEKEIPYVYIPSREQLGLAVGHRRPSILIFVKPSADFQELYDEVAETLHHLTVDAA</sequence>
<dbReference type="EMBL" id="HE600936">
    <property type="protein sequence ID" value="CAP35715.1"/>
    <property type="molecule type" value="Genomic_DNA"/>
</dbReference>
<dbReference type="RefSeq" id="XP_002642246.1">
    <property type="nucleotide sequence ID" value="XM_002642200.1"/>
</dbReference>
<dbReference type="SMR" id="Q60YI3"/>
<dbReference type="FunCoup" id="Q60YI3">
    <property type="interactions" value="1971"/>
</dbReference>
<dbReference type="STRING" id="6238.Q60YI3"/>
<dbReference type="EnsemblMetazoa" id="CBG18231.1">
    <property type="protein sequence ID" value="CBG18231.1"/>
    <property type="gene ID" value="WBGene00037685"/>
</dbReference>
<dbReference type="GeneID" id="8584241"/>
<dbReference type="KEGG" id="cbr:CBG_18231"/>
<dbReference type="CTD" id="8584241"/>
<dbReference type="WormBase" id="CBG18231">
    <property type="protein sequence ID" value="CBP04291"/>
    <property type="gene ID" value="WBGene00037685"/>
</dbReference>
<dbReference type="eggNOG" id="KOG3167">
    <property type="taxonomic scope" value="Eukaryota"/>
</dbReference>
<dbReference type="HOGENOM" id="CLU_084513_1_0_1"/>
<dbReference type="InParanoid" id="Q60YI3"/>
<dbReference type="OMA" id="EDNYEAR"/>
<dbReference type="Proteomes" id="UP000008549">
    <property type="component" value="Unassembled WGS sequence"/>
</dbReference>
<dbReference type="GO" id="GO:0031429">
    <property type="term" value="C:box H/ACA snoRNP complex"/>
    <property type="evidence" value="ECO:0000318"/>
    <property type="project" value="GO_Central"/>
</dbReference>
<dbReference type="GO" id="GO:0005732">
    <property type="term" value="C:sno(s)RNA-containing ribonucleoprotein complex"/>
    <property type="evidence" value="ECO:0000250"/>
    <property type="project" value="UniProtKB"/>
</dbReference>
<dbReference type="GO" id="GO:0034513">
    <property type="term" value="F:box H/ACA snoRNA binding"/>
    <property type="evidence" value="ECO:0000318"/>
    <property type="project" value="GO_Central"/>
</dbReference>
<dbReference type="GO" id="GO:0031118">
    <property type="term" value="P:rRNA pseudouridine synthesis"/>
    <property type="evidence" value="ECO:0000250"/>
    <property type="project" value="UniProtKB"/>
</dbReference>
<dbReference type="GO" id="GO:0031120">
    <property type="term" value="P:snRNA pseudouridine synthesis"/>
    <property type="evidence" value="ECO:0000318"/>
    <property type="project" value="GO_Central"/>
</dbReference>
<dbReference type="FunFam" id="3.30.1330.30:FF:000062">
    <property type="entry name" value="Putative H/ACA ribonucleoprotein complex subunit 2-like protein"/>
    <property type="match status" value="1"/>
</dbReference>
<dbReference type="Gene3D" id="3.30.1330.30">
    <property type="match status" value="1"/>
</dbReference>
<dbReference type="InterPro" id="IPR050257">
    <property type="entry name" value="eL8/uL1-like"/>
</dbReference>
<dbReference type="InterPro" id="IPR002415">
    <property type="entry name" value="H/ACA_rnp_Nhp2-like"/>
</dbReference>
<dbReference type="InterPro" id="IPR029064">
    <property type="entry name" value="Ribosomal_eL30-like_sf"/>
</dbReference>
<dbReference type="InterPro" id="IPR004037">
    <property type="entry name" value="Ribosomal_eL8-like_CS"/>
</dbReference>
<dbReference type="InterPro" id="IPR004038">
    <property type="entry name" value="Ribosomal_eL8/eL30/eS12/Gad45"/>
</dbReference>
<dbReference type="InterPro" id="IPR018492">
    <property type="entry name" value="Ribosomal_eL8/Nhp2"/>
</dbReference>
<dbReference type="PANTHER" id="PTHR23105">
    <property type="entry name" value="RIBOSOMAL PROTEIN L7AE FAMILY MEMBER"/>
    <property type="match status" value="1"/>
</dbReference>
<dbReference type="Pfam" id="PF01248">
    <property type="entry name" value="Ribosomal_L7Ae"/>
    <property type="match status" value="1"/>
</dbReference>
<dbReference type="PRINTS" id="PR00881">
    <property type="entry name" value="L7ARS6FAMILY"/>
</dbReference>
<dbReference type="PRINTS" id="PR00883">
    <property type="entry name" value="NUCLEARHMG"/>
</dbReference>
<dbReference type="SUPFAM" id="SSF55315">
    <property type="entry name" value="L30e-like"/>
    <property type="match status" value="1"/>
</dbReference>
<dbReference type="PROSITE" id="PS01082">
    <property type="entry name" value="RIBOSOMAL_L7AE"/>
    <property type="match status" value="1"/>
</dbReference>
<organism>
    <name type="scientific">Caenorhabditis briggsae</name>
    <dbReference type="NCBI Taxonomy" id="6238"/>
    <lineage>
        <taxon>Eukaryota</taxon>
        <taxon>Metazoa</taxon>
        <taxon>Ecdysozoa</taxon>
        <taxon>Nematoda</taxon>
        <taxon>Chromadorea</taxon>
        <taxon>Rhabditida</taxon>
        <taxon>Rhabditina</taxon>
        <taxon>Rhabditomorpha</taxon>
        <taxon>Rhabditoidea</taxon>
        <taxon>Rhabditidae</taxon>
        <taxon>Peloderinae</taxon>
        <taxon>Caenorhabditis</taxon>
    </lineage>
</organism>
<keyword id="KW-0539">Nucleus</keyword>
<keyword id="KW-1185">Reference proteome</keyword>
<keyword id="KW-0687">Ribonucleoprotein</keyword>
<keyword id="KW-0690">Ribosome biogenesis</keyword>
<keyword id="KW-0694">RNA-binding</keyword>
<keyword id="KW-0698">rRNA processing</keyword>
<comment type="function">
    <text evidence="1">Required for ribosome biogenesis. Part of a complex which catalyzes pseudouridylation of rRNA. This involves the isomerization of uridine such that the ribose is subsequently attached to C5, instead of the normal N1. Pseudouridine ('psi') residues may serve to stabilize the conformation of rRNAs (By similarity).</text>
</comment>
<comment type="subunit">
    <text evidence="1">Component of the small nucleolar ribonucleoprotein particle containing H/ACA-type snoRNAs (H/ACA snoRNPs).</text>
</comment>
<comment type="subcellular location">
    <subcellularLocation>
        <location evidence="1">Nucleus</location>
        <location evidence="1">Nucleolus</location>
    </subcellularLocation>
</comment>
<comment type="similarity">
    <text evidence="2">Belongs to the eukaryotic ribosomal protein eL8 family.</text>
</comment>
<gene>
    <name type="ORF">CBG18231</name>
</gene>
<feature type="chain" id="PRO_0000136770" description="Putative H/ACA ribonucleoprotein complex subunit 2-like protein">
    <location>
        <begin position="1"/>
        <end position="163"/>
    </location>
</feature>
<protein>
    <recommendedName>
        <fullName>Putative H/ACA ribonucleoprotein complex subunit 2-like protein</fullName>
    </recommendedName>
</protein>